<reference key="1">
    <citation type="journal article" date="1994" name="Electrophoresis">
        <title>Separation and sequencing of familiar and novel murine proteins using preparative two-dimensional gel electrophoresis.</title>
        <authorList>
            <person name="Merrick B.A."/>
            <person name="Patterson R.M."/>
            <person name="Wichter L.L."/>
            <person name="He C."/>
            <person name="Selkirk J.K."/>
        </authorList>
    </citation>
    <scope>PROTEIN SEQUENCE</scope>
    <source>
        <tissue>Fibroblast</tissue>
    </source>
</reference>
<proteinExistence type="evidence at protein level"/>
<feature type="chain" id="PRO_0000055549" description="Unknown protein from 2D-PAGE of fibroblasts">
    <location>
        <begin position="1"/>
        <end position="7" status="greater than"/>
    </location>
</feature>
<feature type="non-terminal residue">
    <location>
        <position position="7"/>
    </location>
</feature>
<sequence length="7" mass="842">HEEAELD</sequence>
<dbReference type="InParanoid" id="P38641"/>
<dbReference type="Proteomes" id="UP000000589">
    <property type="component" value="Unplaced"/>
</dbReference>
<organism>
    <name type="scientific">Mus musculus</name>
    <name type="common">Mouse</name>
    <dbReference type="NCBI Taxonomy" id="10090"/>
    <lineage>
        <taxon>Eukaryota</taxon>
        <taxon>Metazoa</taxon>
        <taxon>Chordata</taxon>
        <taxon>Craniata</taxon>
        <taxon>Vertebrata</taxon>
        <taxon>Euteleostomi</taxon>
        <taxon>Mammalia</taxon>
        <taxon>Eutheria</taxon>
        <taxon>Euarchontoglires</taxon>
        <taxon>Glires</taxon>
        <taxon>Rodentia</taxon>
        <taxon>Myomorpha</taxon>
        <taxon>Muroidea</taxon>
        <taxon>Muridae</taxon>
        <taxon>Murinae</taxon>
        <taxon>Mus</taxon>
        <taxon>Mus</taxon>
    </lineage>
</organism>
<accession>P38641</accession>
<protein>
    <recommendedName>
        <fullName>Unknown protein from 2D-PAGE of fibroblasts</fullName>
    </recommendedName>
    <alternativeName>
        <fullName>P36</fullName>
    </alternativeName>
</protein>
<keyword id="KW-0903">Direct protein sequencing</keyword>
<keyword id="KW-1185">Reference proteome</keyword>
<name>UF03_MOUSE</name>
<comment type="miscellaneous">
    <text>On the 2D-gel the determined pI of this unknown protein is: 5.1, its MW is: 36 kDa.</text>
</comment>